<gene>
    <name evidence="2" type="primary">MSANTD5</name>
</gene>
<evidence type="ECO:0000305" key="1"/>
<evidence type="ECO:0000312" key="2">
    <source>
        <dbReference type="HGNC" id="HGNC:55184"/>
    </source>
</evidence>
<organism>
    <name type="scientific">Homo sapiens</name>
    <name type="common">Human</name>
    <dbReference type="NCBI Taxonomy" id="9606"/>
    <lineage>
        <taxon>Eukaryota</taxon>
        <taxon>Metazoa</taxon>
        <taxon>Chordata</taxon>
        <taxon>Craniata</taxon>
        <taxon>Vertebrata</taxon>
        <taxon>Euteleostomi</taxon>
        <taxon>Mammalia</taxon>
        <taxon>Eutheria</taxon>
        <taxon>Euarchontoglires</taxon>
        <taxon>Primates</taxon>
        <taxon>Haplorrhini</taxon>
        <taxon>Catarrhini</taxon>
        <taxon>Hominidae</taxon>
        <taxon>Homo</taxon>
    </lineage>
</organism>
<keyword id="KW-1185">Reference proteome</keyword>
<dbReference type="EMBL" id="AC113348">
    <property type="status" value="NOT_ANNOTATED_CDS"/>
    <property type="molecule type" value="Genomic_DNA"/>
</dbReference>
<dbReference type="CCDS" id="CCDS93835.1"/>
<dbReference type="RefSeq" id="NP_001382365.1">
    <property type="nucleotide sequence ID" value="NM_001395436.2"/>
</dbReference>
<dbReference type="RefSeq" id="XP_016865627.1">
    <property type="nucleotide sequence ID" value="XM_017010138.1"/>
</dbReference>
<dbReference type="RefSeq" id="XP_054207388.1">
    <property type="nucleotide sequence ID" value="XM_054351413.1"/>
</dbReference>
<dbReference type="SMR" id="A0A3B3IT52"/>
<dbReference type="PeptideAtlas" id="A0A3B3IT52"/>
<dbReference type="Ensembl" id="ENST00000648368.2">
    <property type="protein sequence ID" value="ENSP00000497547.1"/>
    <property type="gene ID" value="ENSG00000285891.2"/>
</dbReference>
<dbReference type="GeneID" id="102724657"/>
<dbReference type="MANE-Select" id="ENST00000648368.2">
    <property type="protein sequence ID" value="ENSP00000497547.1"/>
    <property type="RefSeq nucleotide sequence ID" value="NM_001395436.2"/>
    <property type="RefSeq protein sequence ID" value="NP_001382365.1"/>
</dbReference>
<dbReference type="AGR" id="HGNC:55184"/>
<dbReference type="CTD" id="102724657"/>
<dbReference type="GeneCards" id="MSANTD5"/>
<dbReference type="HGNC" id="HGNC:55184">
    <property type="gene designation" value="MSANTD5"/>
</dbReference>
<dbReference type="HPA" id="ENSG00000285891">
    <property type="expression patterns" value="Not detected"/>
</dbReference>
<dbReference type="neXtProt" id="NX_A0A3B3IT52"/>
<dbReference type="VEuPathDB" id="HostDB:ENSG00000285891"/>
<dbReference type="GeneTree" id="ENSGT00840000130327"/>
<dbReference type="InParanoid" id="A0A3B3IT52"/>
<dbReference type="OMA" id="CLQMLIS"/>
<dbReference type="OrthoDB" id="9713707at2759"/>
<dbReference type="PAN-GO" id="A0A3B3IT52">
    <property type="GO annotations" value="0 GO annotations based on evolutionary models"/>
</dbReference>
<dbReference type="ChiTaRS" id="LOC102724657">
    <property type="organism name" value="human"/>
</dbReference>
<dbReference type="Proteomes" id="UP000005640">
    <property type="component" value="Chromosome 5"/>
</dbReference>
<dbReference type="Bgee" id="ENSG00000285891">
    <property type="expression patterns" value="Expressed in male germ line stem cell (sensu Vertebrata) in testis and 36 other cell types or tissues"/>
</dbReference>
<dbReference type="InterPro" id="IPR044822">
    <property type="entry name" value="Myb_DNA-bind_4"/>
</dbReference>
<dbReference type="PANTHER" id="PTHR31512">
    <property type="entry name" value="GENE 12569-RELATED"/>
    <property type="match status" value="1"/>
</dbReference>
<dbReference type="PANTHER" id="PTHR31512:SF2">
    <property type="entry name" value="MYB_SANT DNA BINDING DOMAIN CONTAINING 5"/>
    <property type="match status" value="1"/>
</dbReference>
<dbReference type="Pfam" id="PF13837">
    <property type="entry name" value="Myb_DNA-bind_4"/>
    <property type="match status" value="1"/>
</dbReference>
<protein>
    <recommendedName>
        <fullName evidence="1">Uncharacterized protein MSANTD5</fullName>
    </recommendedName>
    <alternativeName>
        <fullName evidence="2">Myb/SANT DNA binding domain-containing protein 5</fullName>
    </alternativeName>
</protein>
<name>MSD5_HUMAN</name>
<reference key="1">
    <citation type="journal article" date="2004" name="Nature">
        <title>The DNA sequence and comparative analysis of human chromosome 5.</title>
        <authorList>
            <person name="Schmutz J."/>
            <person name="Martin J."/>
            <person name="Terry A."/>
            <person name="Couronne O."/>
            <person name="Grimwood J."/>
            <person name="Lowry S."/>
            <person name="Gordon L.A."/>
            <person name="Scott D."/>
            <person name="Xie G."/>
            <person name="Huang W."/>
            <person name="Hellsten U."/>
            <person name="Tran-Gyamfi M."/>
            <person name="She X."/>
            <person name="Prabhakar S."/>
            <person name="Aerts A."/>
            <person name="Altherr M."/>
            <person name="Bajorek E."/>
            <person name="Black S."/>
            <person name="Branscomb E."/>
            <person name="Caoile C."/>
            <person name="Challacombe J.F."/>
            <person name="Chan Y.M."/>
            <person name="Denys M."/>
            <person name="Detter J.C."/>
            <person name="Escobar J."/>
            <person name="Flowers D."/>
            <person name="Fotopulos D."/>
            <person name="Glavina T."/>
            <person name="Gomez M."/>
            <person name="Gonzales E."/>
            <person name="Goodstein D."/>
            <person name="Grigoriev I."/>
            <person name="Groza M."/>
            <person name="Hammon N."/>
            <person name="Hawkins T."/>
            <person name="Haydu L."/>
            <person name="Israni S."/>
            <person name="Jett J."/>
            <person name="Kadner K."/>
            <person name="Kimball H."/>
            <person name="Kobayashi A."/>
            <person name="Lopez F."/>
            <person name="Lou Y."/>
            <person name="Martinez D."/>
            <person name="Medina C."/>
            <person name="Morgan J."/>
            <person name="Nandkeshwar R."/>
            <person name="Noonan J.P."/>
            <person name="Pitluck S."/>
            <person name="Pollard M."/>
            <person name="Predki P."/>
            <person name="Priest J."/>
            <person name="Ramirez L."/>
            <person name="Retterer J."/>
            <person name="Rodriguez A."/>
            <person name="Rogers S."/>
            <person name="Salamov A."/>
            <person name="Salazar A."/>
            <person name="Thayer N."/>
            <person name="Tice H."/>
            <person name="Tsai M."/>
            <person name="Ustaszewska A."/>
            <person name="Vo N."/>
            <person name="Wheeler J."/>
            <person name="Wu K."/>
            <person name="Yang J."/>
            <person name="Dickson M."/>
            <person name="Cheng J.-F."/>
            <person name="Eichler E.E."/>
            <person name="Olsen A."/>
            <person name="Pennacchio L.A."/>
            <person name="Rokhsar D.S."/>
            <person name="Richardson P."/>
            <person name="Lucas S.M."/>
            <person name="Myers R.M."/>
            <person name="Rubin E.M."/>
        </authorList>
    </citation>
    <scope>NUCLEOTIDE SEQUENCE [LARGE SCALE GENOMIC DNA]</scope>
</reference>
<feature type="chain" id="PRO_0000451609" description="Uncharacterized protein MSANTD5">
    <location>
        <begin position="1"/>
        <end position="213"/>
    </location>
</feature>
<sequence length="213" mass="24520">MEIVILPTETTINIQKMEQENTAQGSEKPSVQSVKPWSDQEIRSFLQEWEFLEREVYRVKKKYHIVSKAIAQRLKQRGINKSWKECLQMLISLQDLYFTIQEANQRPRCQPLPCPYGEALHRILGYRWKISVFSGPPCADVVNLAPPEHPPQAYGVPIVFQEPMWAPTPVIYVENPQVPGWEPWNMNGHVPYMYPALPPAAPGPLTQWAISTD</sequence>
<accession>A0A3B3IT52</accession>
<proteinExistence type="predicted"/>